<feature type="chain" id="PRO_1000165245" description="Riboflavin biosynthesis protein RibBA">
    <location>
        <begin position="1"/>
        <end position="397"/>
    </location>
</feature>
<feature type="region of interest" description="DHBP synthase">
    <location>
        <begin position="1"/>
        <end position="199"/>
    </location>
</feature>
<feature type="region of interest" description="GTP cyclohydrolase II">
    <location>
        <begin position="200"/>
        <end position="397"/>
    </location>
</feature>
<feature type="active site" description="Proton acceptor; for GTP cyclohydrolase activity" evidence="1">
    <location>
        <position position="327"/>
    </location>
</feature>
<feature type="active site" description="Nucleophile; for GTP cyclohydrolase activity" evidence="1">
    <location>
        <position position="329"/>
    </location>
</feature>
<feature type="binding site" evidence="1">
    <location>
        <begin position="26"/>
        <end position="27"/>
    </location>
    <ligand>
        <name>D-ribulose 5-phosphate</name>
        <dbReference type="ChEBI" id="CHEBI:58121"/>
    </ligand>
</feature>
<feature type="binding site" evidence="1">
    <location>
        <position position="27"/>
    </location>
    <ligand>
        <name>Mg(2+)</name>
        <dbReference type="ChEBI" id="CHEBI:18420"/>
        <label>1</label>
    </ligand>
</feature>
<feature type="binding site" evidence="1">
    <location>
        <position position="27"/>
    </location>
    <ligand>
        <name>Mg(2+)</name>
        <dbReference type="ChEBI" id="CHEBI:18420"/>
        <label>2</label>
    </ligand>
</feature>
<feature type="binding site" evidence="1">
    <location>
        <position position="31"/>
    </location>
    <ligand>
        <name>D-ribulose 5-phosphate</name>
        <dbReference type="ChEBI" id="CHEBI:58121"/>
    </ligand>
</feature>
<feature type="binding site" evidence="1">
    <location>
        <begin position="138"/>
        <end position="142"/>
    </location>
    <ligand>
        <name>D-ribulose 5-phosphate</name>
        <dbReference type="ChEBI" id="CHEBI:58121"/>
    </ligand>
</feature>
<feature type="binding site" evidence="1">
    <location>
        <position position="141"/>
    </location>
    <ligand>
        <name>Mg(2+)</name>
        <dbReference type="ChEBI" id="CHEBI:18420"/>
        <label>2</label>
    </ligand>
</feature>
<feature type="binding site" evidence="1">
    <location>
        <position position="162"/>
    </location>
    <ligand>
        <name>D-ribulose 5-phosphate</name>
        <dbReference type="ChEBI" id="CHEBI:58121"/>
    </ligand>
</feature>
<feature type="binding site" evidence="1">
    <location>
        <begin position="250"/>
        <end position="254"/>
    </location>
    <ligand>
        <name>GTP</name>
        <dbReference type="ChEBI" id="CHEBI:37565"/>
    </ligand>
</feature>
<feature type="binding site" evidence="1">
    <location>
        <position position="255"/>
    </location>
    <ligand>
        <name>Zn(2+)</name>
        <dbReference type="ChEBI" id="CHEBI:29105"/>
        <note>catalytic</note>
    </ligand>
</feature>
<feature type="binding site" evidence="1">
    <location>
        <position position="266"/>
    </location>
    <ligand>
        <name>Zn(2+)</name>
        <dbReference type="ChEBI" id="CHEBI:29105"/>
        <note>catalytic</note>
    </ligand>
</feature>
<feature type="binding site" evidence="1">
    <location>
        <position position="268"/>
    </location>
    <ligand>
        <name>Zn(2+)</name>
        <dbReference type="ChEBI" id="CHEBI:29105"/>
        <note>catalytic</note>
    </ligand>
</feature>
<feature type="binding site" evidence="1">
    <location>
        <position position="271"/>
    </location>
    <ligand>
        <name>GTP</name>
        <dbReference type="ChEBI" id="CHEBI:37565"/>
    </ligand>
</feature>
<feature type="binding site" evidence="1">
    <location>
        <begin position="293"/>
        <end position="295"/>
    </location>
    <ligand>
        <name>GTP</name>
        <dbReference type="ChEBI" id="CHEBI:37565"/>
    </ligand>
</feature>
<feature type="binding site" evidence="1">
    <location>
        <position position="315"/>
    </location>
    <ligand>
        <name>GTP</name>
        <dbReference type="ChEBI" id="CHEBI:37565"/>
    </ligand>
</feature>
<feature type="binding site" evidence="1">
    <location>
        <position position="350"/>
    </location>
    <ligand>
        <name>GTP</name>
        <dbReference type="ChEBI" id="CHEBI:37565"/>
    </ligand>
</feature>
<feature type="binding site" evidence="1">
    <location>
        <position position="355"/>
    </location>
    <ligand>
        <name>GTP</name>
        <dbReference type="ChEBI" id="CHEBI:37565"/>
    </ligand>
</feature>
<feature type="site" description="Essential for DHBP synthase activity" evidence="1">
    <location>
        <position position="124"/>
    </location>
</feature>
<feature type="site" description="Essential for DHBP synthase activity" evidence="1">
    <location>
        <position position="162"/>
    </location>
</feature>
<name>RIBBA_BACCQ</name>
<reference key="1">
    <citation type="journal article" date="2009" name="J. Bacteriol.">
        <title>Complete genome sequence of the extremophilic Bacillus cereus strain Q1 with industrial applications.</title>
        <authorList>
            <person name="Xiong Z."/>
            <person name="Jiang Y."/>
            <person name="Qi D."/>
            <person name="Lu H."/>
            <person name="Yang F."/>
            <person name="Yang J."/>
            <person name="Chen L."/>
            <person name="Sun L."/>
            <person name="Xu X."/>
            <person name="Xue Y."/>
            <person name="Zhu Y."/>
            <person name="Jin Q."/>
        </authorList>
    </citation>
    <scope>NUCLEOTIDE SEQUENCE [LARGE SCALE GENOMIC DNA]</scope>
    <source>
        <strain>Q1</strain>
    </source>
</reference>
<proteinExistence type="inferred from homology"/>
<dbReference type="EC" id="4.1.99.12" evidence="1"/>
<dbReference type="EC" id="3.5.4.25" evidence="1"/>
<dbReference type="EMBL" id="CP000227">
    <property type="protein sequence ID" value="ACM14329.1"/>
    <property type="molecule type" value="Genomic_DNA"/>
</dbReference>
<dbReference type="SMR" id="B9IWX4"/>
<dbReference type="KEGG" id="bcq:BCQ_3901"/>
<dbReference type="HOGENOM" id="CLU_020273_1_2_9"/>
<dbReference type="UniPathway" id="UPA00275">
    <property type="reaction ID" value="UER00399"/>
</dbReference>
<dbReference type="UniPathway" id="UPA00275">
    <property type="reaction ID" value="UER00400"/>
</dbReference>
<dbReference type="Proteomes" id="UP000000441">
    <property type="component" value="Chromosome"/>
</dbReference>
<dbReference type="GO" id="GO:0005829">
    <property type="term" value="C:cytosol"/>
    <property type="evidence" value="ECO:0007669"/>
    <property type="project" value="TreeGrafter"/>
</dbReference>
<dbReference type="GO" id="GO:0008686">
    <property type="term" value="F:3,4-dihydroxy-2-butanone-4-phosphate synthase activity"/>
    <property type="evidence" value="ECO:0007669"/>
    <property type="project" value="UniProtKB-UniRule"/>
</dbReference>
<dbReference type="GO" id="GO:0005525">
    <property type="term" value="F:GTP binding"/>
    <property type="evidence" value="ECO:0007669"/>
    <property type="project" value="UniProtKB-KW"/>
</dbReference>
<dbReference type="GO" id="GO:0003935">
    <property type="term" value="F:GTP cyclohydrolase II activity"/>
    <property type="evidence" value="ECO:0007669"/>
    <property type="project" value="UniProtKB-UniRule"/>
</dbReference>
<dbReference type="GO" id="GO:0000287">
    <property type="term" value="F:magnesium ion binding"/>
    <property type="evidence" value="ECO:0007669"/>
    <property type="project" value="UniProtKB-UniRule"/>
</dbReference>
<dbReference type="GO" id="GO:0030145">
    <property type="term" value="F:manganese ion binding"/>
    <property type="evidence" value="ECO:0007669"/>
    <property type="project" value="UniProtKB-UniRule"/>
</dbReference>
<dbReference type="GO" id="GO:0008270">
    <property type="term" value="F:zinc ion binding"/>
    <property type="evidence" value="ECO:0007669"/>
    <property type="project" value="UniProtKB-UniRule"/>
</dbReference>
<dbReference type="GO" id="GO:0009231">
    <property type="term" value="P:riboflavin biosynthetic process"/>
    <property type="evidence" value="ECO:0007669"/>
    <property type="project" value="UniProtKB-UniRule"/>
</dbReference>
<dbReference type="CDD" id="cd00641">
    <property type="entry name" value="GTP_cyclohydro2"/>
    <property type="match status" value="1"/>
</dbReference>
<dbReference type="FunFam" id="3.40.50.10990:FF:000001">
    <property type="entry name" value="Riboflavin biosynthesis protein RibBA"/>
    <property type="match status" value="1"/>
</dbReference>
<dbReference type="FunFam" id="3.90.870.10:FF:000001">
    <property type="entry name" value="Riboflavin biosynthesis protein RibBA"/>
    <property type="match status" value="1"/>
</dbReference>
<dbReference type="Gene3D" id="3.90.870.10">
    <property type="entry name" value="DHBP synthase"/>
    <property type="match status" value="1"/>
</dbReference>
<dbReference type="Gene3D" id="3.40.50.10990">
    <property type="entry name" value="GTP cyclohydrolase II"/>
    <property type="match status" value="1"/>
</dbReference>
<dbReference type="HAMAP" id="MF_00179">
    <property type="entry name" value="RibA"/>
    <property type="match status" value="1"/>
</dbReference>
<dbReference type="HAMAP" id="MF_00180">
    <property type="entry name" value="RibB"/>
    <property type="match status" value="1"/>
</dbReference>
<dbReference type="HAMAP" id="MF_01283">
    <property type="entry name" value="RibBA"/>
    <property type="match status" value="1"/>
</dbReference>
<dbReference type="InterPro" id="IPR017945">
    <property type="entry name" value="DHBP_synth_RibB-like_a/b_dom"/>
</dbReference>
<dbReference type="InterPro" id="IPR000422">
    <property type="entry name" value="DHBP_synthase_RibB"/>
</dbReference>
<dbReference type="InterPro" id="IPR032677">
    <property type="entry name" value="GTP_cyclohydro_II"/>
</dbReference>
<dbReference type="InterPro" id="IPR000926">
    <property type="entry name" value="RibA"/>
</dbReference>
<dbReference type="InterPro" id="IPR036144">
    <property type="entry name" value="RibA-like_sf"/>
</dbReference>
<dbReference type="InterPro" id="IPR016299">
    <property type="entry name" value="Riboflavin_synth_RibBA"/>
</dbReference>
<dbReference type="NCBIfam" id="NF001591">
    <property type="entry name" value="PRK00393.1"/>
    <property type="match status" value="1"/>
</dbReference>
<dbReference type="NCBIfam" id="NF006803">
    <property type="entry name" value="PRK09311.1"/>
    <property type="match status" value="1"/>
</dbReference>
<dbReference type="NCBIfam" id="TIGR00505">
    <property type="entry name" value="ribA"/>
    <property type="match status" value="1"/>
</dbReference>
<dbReference type="NCBIfam" id="TIGR00506">
    <property type="entry name" value="ribB"/>
    <property type="match status" value="1"/>
</dbReference>
<dbReference type="PANTHER" id="PTHR21327:SF18">
    <property type="entry name" value="3,4-DIHYDROXY-2-BUTANONE 4-PHOSPHATE SYNTHASE"/>
    <property type="match status" value="1"/>
</dbReference>
<dbReference type="PANTHER" id="PTHR21327">
    <property type="entry name" value="GTP CYCLOHYDROLASE II-RELATED"/>
    <property type="match status" value="1"/>
</dbReference>
<dbReference type="Pfam" id="PF00926">
    <property type="entry name" value="DHBP_synthase"/>
    <property type="match status" value="1"/>
</dbReference>
<dbReference type="Pfam" id="PF00925">
    <property type="entry name" value="GTP_cyclohydro2"/>
    <property type="match status" value="1"/>
</dbReference>
<dbReference type="PIRSF" id="PIRSF001259">
    <property type="entry name" value="RibA"/>
    <property type="match status" value="1"/>
</dbReference>
<dbReference type="SUPFAM" id="SSF142695">
    <property type="entry name" value="RibA-like"/>
    <property type="match status" value="1"/>
</dbReference>
<dbReference type="SUPFAM" id="SSF55821">
    <property type="entry name" value="YrdC/RibB"/>
    <property type="match status" value="1"/>
</dbReference>
<keyword id="KW-0342">GTP-binding</keyword>
<keyword id="KW-0378">Hydrolase</keyword>
<keyword id="KW-0456">Lyase</keyword>
<keyword id="KW-0460">Magnesium</keyword>
<keyword id="KW-0464">Manganese</keyword>
<keyword id="KW-0479">Metal-binding</keyword>
<keyword id="KW-0511">Multifunctional enzyme</keyword>
<keyword id="KW-0547">Nucleotide-binding</keyword>
<keyword id="KW-0686">Riboflavin biosynthesis</keyword>
<keyword id="KW-0862">Zinc</keyword>
<protein>
    <recommendedName>
        <fullName evidence="1">Riboflavin biosynthesis protein RibBA</fullName>
    </recommendedName>
    <domain>
        <recommendedName>
            <fullName evidence="1">3,4-dihydroxy-2-butanone 4-phosphate synthase</fullName>
            <shortName evidence="1">DHBP synthase</shortName>
            <ecNumber evidence="1">4.1.99.12</ecNumber>
        </recommendedName>
    </domain>
    <domain>
        <recommendedName>
            <fullName evidence="1">GTP cyclohydrolase-2</fullName>
            <ecNumber evidence="1">3.5.4.25</ecNumber>
        </recommendedName>
        <alternativeName>
            <fullName evidence="1">GTP cyclohydrolase II</fullName>
        </alternativeName>
    </domain>
</protein>
<sequence>MFHRIEEALEDLKQGKVVIVCDDENRENEGDFIALAEYITPETINFMITHGRGLVCVPITEGYAERLQLEPMVAHNTDSHHTAFTVSIDHVSTTTGISAHERATTIREMLNPASKGADFNRPGHIFPLIAKEGGVLRRAGHTEAAVDLAQLCGAEPAGVICEIINEDGTMARVPDLLQCAKQFDIKMITIEDLIAYRRHHETLVTREVEITLPTDFGTFHAIGYSNSLDSKEHIALVKGDISTGDPVLVRVHSECLTGDVFGSCRCDCGPQLHAALAQIEREGKGVLLYMRQEGRGIGLLNKLRAYKLQEEGFDTVEANEKLGFPADLRDYGIGAQILKDLGLQHLRLLTNNPRKIAGLQGYDLEVIERVPLQMPAKEENKTYLQTKVNKLGHLLNL</sequence>
<accession>B9IWX4</accession>
<evidence type="ECO:0000255" key="1">
    <source>
        <dbReference type="HAMAP-Rule" id="MF_01283"/>
    </source>
</evidence>
<comment type="function">
    <text evidence="1">Catalyzes the conversion of D-ribulose 5-phosphate to formate and 3,4-dihydroxy-2-butanone 4-phosphate.</text>
</comment>
<comment type="function">
    <text evidence="1">Catalyzes the conversion of GTP to 2,5-diamino-6-ribosylamino-4(3H)-pyrimidinone 5'-phosphate (DARP), formate and pyrophosphate.</text>
</comment>
<comment type="catalytic activity">
    <reaction evidence="1">
        <text>D-ribulose 5-phosphate = (2S)-2-hydroxy-3-oxobutyl phosphate + formate + H(+)</text>
        <dbReference type="Rhea" id="RHEA:18457"/>
        <dbReference type="ChEBI" id="CHEBI:15378"/>
        <dbReference type="ChEBI" id="CHEBI:15740"/>
        <dbReference type="ChEBI" id="CHEBI:58121"/>
        <dbReference type="ChEBI" id="CHEBI:58830"/>
        <dbReference type="EC" id="4.1.99.12"/>
    </reaction>
</comment>
<comment type="catalytic activity">
    <reaction evidence="1">
        <text>GTP + 4 H2O = 2,5-diamino-6-hydroxy-4-(5-phosphoribosylamino)-pyrimidine + formate + 2 phosphate + 3 H(+)</text>
        <dbReference type="Rhea" id="RHEA:23704"/>
        <dbReference type="ChEBI" id="CHEBI:15377"/>
        <dbReference type="ChEBI" id="CHEBI:15378"/>
        <dbReference type="ChEBI" id="CHEBI:15740"/>
        <dbReference type="ChEBI" id="CHEBI:37565"/>
        <dbReference type="ChEBI" id="CHEBI:43474"/>
        <dbReference type="ChEBI" id="CHEBI:58614"/>
        <dbReference type="EC" id="3.5.4.25"/>
    </reaction>
</comment>
<comment type="cofactor">
    <cofactor evidence="1">
        <name>Mg(2+)</name>
        <dbReference type="ChEBI" id="CHEBI:18420"/>
    </cofactor>
    <cofactor evidence="1">
        <name>Mn(2+)</name>
        <dbReference type="ChEBI" id="CHEBI:29035"/>
    </cofactor>
    <text evidence="1">Binds 2 divalent metal cations per subunit. Magnesium or manganese.</text>
</comment>
<comment type="cofactor">
    <cofactor evidence="1">
        <name>Zn(2+)</name>
        <dbReference type="ChEBI" id="CHEBI:29105"/>
    </cofactor>
    <text evidence="1">Binds 1 zinc ion per subunit.</text>
</comment>
<comment type="pathway">
    <text evidence="1">Cofactor biosynthesis; riboflavin biosynthesis; 2-hydroxy-3-oxobutyl phosphate from D-ribulose 5-phosphate: step 1/1.</text>
</comment>
<comment type="pathway">
    <text evidence="1">Cofactor biosynthesis; riboflavin biosynthesis; 5-amino-6-(D-ribitylamino)uracil from GTP: step 1/4.</text>
</comment>
<comment type="similarity">
    <text evidence="1">In the N-terminal section; belongs to the DHBP synthase family.</text>
</comment>
<comment type="similarity">
    <text evidence="1">In the C-terminal section; belongs to the GTP cyclohydrolase II family.</text>
</comment>
<gene>
    <name evidence="1" type="primary">ribBA</name>
    <name type="ordered locus">BCQ_3901</name>
</gene>
<organism>
    <name type="scientific">Bacillus cereus (strain Q1)</name>
    <dbReference type="NCBI Taxonomy" id="361100"/>
    <lineage>
        <taxon>Bacteria</taxon>
        <taxon>Bacillati</taxon>
        <taxon>Bacillota</taxon>
        <taxon>Bacilli</taxon>
        <taxon>Bacillales</taxon>
        <taxon>Bacillaceae</taxon>
        <taxon>Bacillus</taxon>
        <taxon>Bacillus cereus group</taxon>
    </lineage>
</organism>